<dbReference type="EC" id="1.11.1.21" evidence="1"/>
<dbReference type="EMBL" id="CP000394">
    <property type="protein sequence ID" value="ABI62575.1"/>
    <property type="molecule type" value="Genomic_DNA"/>
</dbReference>
<dbReference type="SMR" id="Q0BRH7"/>
<dbReference type="STRING" id="391165.GbCGDNIH1_1677"/>
<dbReference type="PeroxiBase" id="7329">
    <property type="entry name" value="GbeCP01"/>
</dbReference>
<dbReference type="KEGG" id="gbe:GbCGDNIH1_1677"/>
<dbReference type="eggNOG" id="COG0376">
    <property type="taxonomic scope" value="Bacteria"/>
</dbReference>
<dbReference type="HOGENOM" id="CLU_025424_2_0_5"/>
<dbReference type="Proteomes" id="UP000001963">
    <property type="component" value="Chromosome"/>
</dbReference>
<dbReference type="GO" id="GO:0005829">
    <property type="term" value="C:cytosol"/>
    <property type="evidence" value="ECO:0007669"/>
    <property type="project" value="TreeGrafter"/>
</dbReference>
<dbReference type="GO" id="GO:0004096">
    <property type="term" value="F:catalase activity"/>
    <property type="evidence" value="ECO:0007669"/>
    <property type="project" value="UniProtKB-UniRule"/>
</dbReference>
<dbReference type="GO" id="GO:0020037">
    <property type="term" value="F:heme binding"/>
    <property type="evidence" value="ECO:0007669"/>
    <property type="project" value="InterPro"/>
</dbReference>
<dbReference type="GO" id="GO:0046872">
    <property type="term" value="F:metal ion binding"/>
    <property type="evidence" value="ECO:0007669"/>
    <property type="project" value="UniProtKB-KW"/>
</dbReference>
<dbReference type="GO" id="GO:0070301">
    <property type="term" value="P:cellular response to hydrogen peroxide"/>
    <property type="evidence" value="ECO:0007669"/>
    <property type="project" value="TreeGrafter"/>
</dbReference>
<dbReference type="GO" id="GO:0042744">
    <property type="term" value="P:hydrogen peroxide catabolic process"/>
    <property type="evidence" value="ECO:0007669"/>
    <property type="project" value="UniProtKB-KW"/>
</dbReference>
<dbReference type="CDD" id="cd00649">
    <property type="entry name" value="catalase_peroxidase_1"/>
    <property type="match status" value="1"/>
</dbReference>
<dbReference type="CDD" id="cd08200">
    <property type="entry name" value="catalase_peroxidase_2"/>
    <property type="match status" value="1"/>
</dbReference>
<dbReference type="FunFam" id="1.10.420.10:FF:000004">
    <property type="entry name" value="Catalase-peroxidase"/>
    <property type="match status" value="1"/>
</dbReference>
<dbReference type="FunFam" id="1.10.520.10:FF:000002">
    <property type="entry name" value="Catalase-peroxidase"/>
    <property type="match status" value="1"/>
</dbReference>
<dbReference type="Gene3D" id="1.10.520.10">
    <property type="match status" value="2"/>
</dbReference>
<dbReference type="Gene3D" id="1.10.420.10">
    <property type="entry name" value="Peroxidase, domain 2"/>
    <property type="match status" value="2"/>
</dbReference>
<dbReference type="HAMAP" id="MF_01961">
    <property type="entry name" value="Catal_peroxid"/>
    <property type="match status" value="1"/>
</dbReference>
<dbReference type="InterPro" id="IPR000763">
    <property type="entry name" value="Catalase_peroxidase"/>
</dbReference>
<dbReference type="InterPro" id="IPR002016">
    <property type="entry name" value="Haem_peroxidase"/>
</dbReference>
<dbReference type="InterPro" id="IPR010255">
    <property type="entry name" value="Haem_peroxidase_sf"/>
</dbReference>
<dbReference type="InterPro" id="IPR019794">
    <property type="entry name" value="Peroxidases_AS"/>
</dbReference>
<dbReference type="InterPro" id="IPR019793">
    <property type="entry name" value="Peroxidases_heam-ligand_BS"/>
</dbReference>
<dbReference type="NCBIfam" id="TIGR00198">
    <property type="entry name" value="cat_per_HPI"/>
    <property type="match status" value="1"/>
</dbReference>
<dbReference type="NCBIfam" id="NF011635">
    <property type="entry name" value="PRK15061.1"/>
    <property type="match status" value="1"/>
</dbReference>
<dbReference type="PANTHER" id="PTHR30555:SF0">
    <property type="entry name" value="CATALASE-PEROXIDASE"/>
    <property type="match status" value="1"/>
</dbReference>
<dbReference type="PANTHER" id="PTHR30555">
    <property type="entry name" value="HYDROPEROXIDASE I, BIFUNCTIONAL CATALASE-PEROXIDASE"/>
    <property type="match status" value="1"/>
</dbReference>
<dbReference type="Pfam" id="PF00141">
    <property type="entry name" value="peroxidase"/>
    <property type="match status" value="2"/>
</dbReference>
<dbReference type="PRINTS" id="PR00460">
    <property type="entry name" value="BPEROXIDASE"/>
</dbReference>
<dbReference type="PRINTS" id="PR00458">
    <property type="entry name" value="PEROXIDASE"/>
</dbReference>
<dbReference type="SUPFAM" id="SSF48113">
    <property type="entry name" value="Heme-dependent peroxidases"/>
    <property type="match status" value="2"/>
</dbReference>
<dbReference type="PROSITE" id="PS00435">
    <property type="entry name" value="PEROXIDASE_1"/>
    <property type="match status" value="1"/>
</dbReference>
<dbReference type="PROSITE" id="PS00436">
    <property type="entry name" value="PEROXIDASE_2"/>
    <property type="match status" value="1"/>
</dbReference>
<dbReference type="PROSITE" id="PS50873">
    <property type="entry name" value="PEROXIDASE_4"/>
    <property type="match status" value="1"/>
</dbReference>
<organism>
    <name type="scientific">Granulibacter bethesdensis (strain ATCC BAA-1260 / CGDNIH1)</name>
    <dbReference type="NCBI Taxonomy" id="391165"/>
    <lineage>
        <taxon>Bacteria</taxon>
        <taxon>Pseudomonadati</taxon>
        <taxon>Pseudomonadota</taxon>
        <taxon>Alphaproteobacteria</taxon>
        <taxon>Acetobacterales</taxon>
        <taxon>Acetobacteraceae</taxon>
        <taxon>Granulibacter</taxon>
    </lineage>
</organism>
<feature type="signal peptide" evidence="1">
    <location>
        <begin position="1"/>
        <end position="45"/>
    </location>
</feature>
<feature type="chain" id="PRO_0000354805" description="Catalase-peroxidase">
    <location>
        <begin position="46"/>
        <end position="760"/>
    </location>
</feature>
<feature type="active site" description="Proton acceptor" evidence="1">
    <location>
        <position position="125"/>
    </location>
</feature>
<feature type="binding site" description="axial binding residue" evidence="1">
    <location>
        <position position="286"/>
    </location>
    <ligand>
        <name>heme b</name>
        <dbReference type="ChEBI" id="CHEBI:60344"/>
    </ligand>
    <ligandPart>
        <name>Fe</name>
        <dbReference type="ChEBI" id="CHEBI:18248"/>
    </ligandPart>
</feature>
<feature type="site" description="Transition state stabilizer" evidence="1">
    <location>
        <position position="121"/>
    </location>
</feature>
<feature type="cross-link" description="Tryptophyl-tyrosyl-methioninium (Trp-Tyr) (with M-271)" evidence="1">
    <location>
        <begin position="124"/>
        <end position="245"/>
    </location>
</feature>
<feature type="cross-link" description="Tryptophyl-tyrosyl-methioninium (Tyr-Met) (with W-124)" evidence="1">
    <location>
        <begin position="245"/>
        <end position="271"/>
    </location>
</feature>
<protein>
    <recommendedName>
        <fullName evidence="1">Catalase-peroxidase</fullName>
        <shortName evidence="1">CP</shortName>
        <ecNumber evidence="1">1.11.1.21</ecNumber>
    </recommendedName>
    <alternativeName>
        <fullName evidence="1">Peroxidase/catalase</fullName>
    </alternativeName>
</protein>
<sequence length="760" mass="83184">MKGTPFRSPHLYQEGSSCMHRTIRSVAAVLTVVLSATIPMVPAWSDGEPRSIQFWWPDHLDLSPLRQHAAESDPLGANFNYIKAFQTLDLGAVKKDIAVLLKTPQDWWPADYGNYGPFFIRMAWHGAGTYRTYDGRGGASGAQQRFEPLNSWPDNANLDKARRLLWPIKKKYGEKLSWGDLMVLTGNVALETMGFKTYGFAGGRTDDWEPDLIYWGSGAKFMSNNRDKNGKLEKPLAATQMGLIYVNPEGPNGVPDPVAAARDIREAFGGMAMDDEETVALIAGGHTFGKAHGAASPSKCVGPAPAAAGIEEQGLGWKNKCGTGKGPDAITSGLEGAWSADPVNFTSQYLDNLFGFDWVLTKSPGGAVQWKPKDASADQLVPDAFDASKRHPPMMFTTDIALKTDPSYRKIALSFQKDPEKFKAAFARAWFKLVHRDMGPRSRYFGPEVPKEDLLWQDPLPAITYKAVDEADITDLKQKILASGLTVPELVRTAWGSAASFRGTDKRGGANGARIRLAPEKDWPVNDPQELKKVLDKLESIQTAFNDGNHDGKKISLADLIVLGGNVGVEEAAKKAGYPVTVPFAPGRVDAVQAQTDVKSFAVLEPTADGFRNYYASSNQLSPAEMLVTRASMLNLTVPEMTVLVGGMRVLDANEGHSQLGVLTDHPGVLSNDFFVNLLDMSTKWSKAADTAGVYEGHDRKTDALRWKGSTVDLIFGSNSELRAVAEVYASDDAKEKFVRDFVAAWNKVMTLDRFDLQRQ</sequence>
<comment type="function">
    <text evidence="1">Bifunctional enzyme with both catalase and broad-spectrum peroxidase activity.</text>
</comment>
<comment type="catalytic activity">
    <reaction evidence="1">
        <text>H2O2 + AH2 = A + 2 H2O</text>
        <dbReference type="Rhea" id="RHEA:30275"/>
        <dbReference type="ChEBI" id="CHEBI:13193"/>
        <dbReference type="ChEBI" id="CHEBI:15377"/>
        <dbReference type="ChEBI" id="CHEBI:16240"/>
        <dbReference type="ChEBI" id="CHEBI:17499"/>
        <dbReference type="EC" id="1.11.1.21"/>
    </reaction>
</comment>
<comment type="catalytic activity">
    <reaction evidence="1">
        <text>2 H2O2 = O2 + 2 H2O</text>
        <dbReference type="Rhea" id="RHEA:20309"/>
        <dbReference type="ChEBI" id="CHEBI:15377"/>
        <dbReference type="ChEBI" id="CHEBI:15379"/>
        <dbReference type="ChEBI" id="CHEBI:16240"/>
        <dbReference type="EC" id="1.11.1.21"/>
    </reaction>
</comment>
<comment type="cofactor">
    <cofactor evidence="1">
        <name>heme b</name>
        <dbReference type="ChEBI" id="CHEBI:60344"/>
    </cofactor>
    <text evidence="1">Binds 1 heme b (iron(II)-protoporphyrin IX) group per dimer.</text>
</comment>
<comment type="subunit">
    <text evidence="1">Homodimer or homotetramer.</text>
</comment>
<comment type="PTM">
    <text evidence="1">Formation of the three residue Trp-Tyr-Met cross-link is important for the catalase, but not the peroxidase activity of the enzyme.</text>
</comment>
<comment type="similarity">
    <text evidence="1">Belongs to the peroxidase family. Peroxidase/catalase subfamily.</text>
</comment>
<evidence type="ECO:0000255" key="1">
    <source>
        <dbReference type="HAMAP-Rule" id="MF_01961"/>
    </source>
</evidence>
<accession>Q0BRH7</accession>
<gene>
    <name evidence="1" type="primary">katG</name>
    <name type="ordered locus">GbCGDNIH1_1677</name>
</gene>
<keyword id="KW-0349">Heme</keyword>
<keyword id="KW-0376">Hydrogen peroxide</keyword>
<keyword id="KW-0408">Iron</keyword>
<keyword id="KW-0479">Metal-binding</keyword>
<keyword id="KW-0560">Oxidoreductase</keyword>
<keyword id="KW-0575">Peroxidase</keyword>
<keyword id="KW-1185">Reference proteome</keyword>
<keyword id="KW-0732">Signal</keyword>
<name>KATG_GRABC</name>
<proteinExistence type="inferred from homology"/>
<reference key="1">
    <citation type="journal article" date="2007" name="J. Bacteriol.">
        <title>Genome sequence analysis of the emerging human pathogenic acetic acid bacterium Granulibacter bethesdensis.</title>
        <authorList>
            <person name="Greenberg D.E."/>
            <person name="Porcella S.F."/>
            <person name="Zelazny A.M."/>
            <person name="Virtaneva K."/>
            <person name="Sturdevant D.E."/>
            <person name="Kupko J.J. III"/>
            <person name="Barbian K.D."/>
            <person name="Babar A."/>
            <person name="Dorward D.W."/>
            <person name="Holland S.M."/>
        </authorList>
    </citation>
    <scope>NUCLEOTIDE SEQUENCE [LARGE SCALE GENOMIC DNA]</scope>
    <source>
        <strain>ATCC BAA-1260 / CGDNIH1</strain>
    </source>
</reference>